<protein>
    <recommendedName>
        <fullName evidence="1">Translational regulator CsrA</fullName>
    </recommendedName>
</protein>
<dbReference type="EMBL" id="CP001615">
    <property type="protein sequence ID" value="ACQ69857.1"/>
    <property type="molecule type" value="Genomic_DNA"/>
</dbReference>
<dbReference type="RefSeq" id="WP_012726976.1">
    <property type="nucleotide sequence ID" value="NC_012673.1"/>
</dbReference>
<dbReference type="SMR" id="C4L5P2"/>
<dbReference type="STRING" id="360911.EAT1b_0928"/>
<dbReference type="KEGG" id="eat:EAT1b_0928"/>
<dbReference type="eggNOG" id="COG1551">
    <property type="taxonomic scope" value="Bacteria"/>
</dbReference>
<dbReference type="HOGENOM" id="CLU_164837_0_2_9"/>
<dbReference type="OrthoDB" id="9809061at2"/>
<dbReference type="Proteomes" id="UP000000716">
    <property type="component" value="Chromosome"/>
</dbReference>
<dbReference type="GO" id="GO:0005829">
    <property type="term" value="C:cytosol"/>
    <property type="evidence" value="ECO:0007669"/>
    <property type="project" value="TreeGrafter"/>
</dbReference>
<dbReference type="GO" id="GO:0048027">
    <property type="term" value="F:mRNA 5'-UTR binding"/>
    <property type="evidence" value="ECO:0007669"/>
    <property type="project" value="UniProtKB-UniRule"/>
</dbReference>
<dbReference type="GO" id="GO:0044781">
    <property type="term" value="P:bacterial-type flagellum organization"/>
    <property type="evidence" value="ECO:0007669"/>
    <property type="project" value="UniProtKB-KW"/>
</dbReference>
<dbReference type="GO" id="GO:0006402">
    <property type="term" value="P:mRNA catabolic process"/>
    <property type="evidence" value="ECO:0007669"/>
    <property type="project" value="InterPro"/>
</dbReference>
<dbReference type="GO" id="GO:0045947">
    <property type="term" value="P:negative regulation of translational initiation"/>
    <property type="evidence" value="ECO:0007669"/>
    <property type="project" value="UniProtKB-UniRule"/>
</dbReference>
<dbReference type="GO" id="GO:1902208">
    <property type="term" value="P:regulation of bacterial-type flagellum assembly"/>
    <property type="evidence" value="ECO:0007669"/>
    <property type="project" value="UniProtKB-UniRule"/>
</dbReference>
<dbReference type="GO" id="GO:0006109">
    <property type="term" value="P:regulation of carbohydrate metabolic process"/>
    <property type="evidence" value="ECO:0007669"/>
    <property type="project" value="InterPro"/>
</dbReference>
<dbReference type="FunFam" id="2.60.40.4380:FF:000002">
    <property type="entry name" value="Translational regulator CsrA"/>
    <property type="match status" value="1"/>
</dbReference>
<dbReference type="Gene3D" id="2.60.40.4380">
    <property type="entry name" value="Translational regulator CsrA"/>
    <property type="match status" value="1"/>
</dbReference>
<dbReference type="HAMAP" id="MF_00167">
    <property type="entry name" value="CsrA"/>
    <property type="match status" value="1"/>
</dbReference>
<dbReference type="InterPro" id="IPR003751">
    <property type="entry name" value="CsrA"/>
</dbReference>
<dbReference type="InterPro" id="IPR036107">
    <property type="entry name" value="CsrA_sf"/>
</dbReference>
<dbReference type="NCBIfam" id="TIGR00202">
    <property type="entry name" value="csrA"/>
    <property type="match status" value="1"/>
</dbReference>
<dbReference type="NCBIfam" id="NF002469">
    <property type="entry name" value="PRK01712.1"/>
    <property type="match status" value="1"/>
</dbReference>
<dbReference type="PANTHER" id="PTHR34984">
    <property type="entry name" value="CARBON STORAGE REGULATOR"/>
    <property type="match status" value="1"/>
</dbReference>
<dbReference type="PANTHER" id="PTHR34984:SF1">
    <property type="entry name" value="CARBON STORAGE REGULATOR"/>
    <property type="match status" value="1"/>
</dbReference>
<dbReference type="Pfam" id="PF02599">
    <property type="entry name" value="CsrA"/>
    <property type="match status" value="1"/>
</dbReference>
<dbReference type="SUPFAM" id="SSF117130">
    <property type="entry name" value="CsrA-like"/>
    <property type="match status" value="1"/>
</dbReference>
<organism>
    <name type="scientific">Exiguobacterium sp. (strain ATCC BAA-1283 / AT1b)</name>
    <dbReference type="NCBI Taxonomy" id="360911"/>
    <lineage>
        <taxon>Bacteria</taxon>
        <taxon>Bacillati</taxon>
        <taxon>Bacillota</taxon>
        <taxon>Bacilli</taxon>
        <taxon>Bacillales</taxon>
        <taxon>Bacillales Family XII. Incertae Sedis</taxon>
        <taxon>Exiguobacterium</taxon>
    </lineage>
</organism>
<reference key="1">
    <citation type="journal article" date="2011" name="J. Bacteriol.">
        <title>Complete genome sequence of the Thermophilic Bacterium Exiguobacterium sp. AT1b.</title>
        <authorList>
            <person name="Vishnivetskaya T.A."/>
            <person name="Lucas S."/>
            <person name="Copeland A."/>
            <person name="Lapidus A."/>
            <person name="Glavina del Rio T."/>
            <person name="Dalin E."/>
            <person name="Tice H."/>
            <person name="Bruce D.C."/>
            <person name="Goodwin L.A."/>
            <person name="Pitluck S."/>
            <person name="Saunders E."/>
            <person name="Brettin T."/>
            <person name="Detter C."/>
            <person name="Han C."/>
            <person name="Larimer F."/>
            <person name="Land M.L."/>
            <person name="Hauser L.J."/>
            <person name="Kyrpides N.C."/>
            <person name="Ovchinnikova G."/>
            <person name="Kathariou S."/>
            <person name="Ramaley R.F."/>
            <person name="Rodrigues D.F."/>
            <person name="Hendrix C."/>
            <person name="Richardson P."/>
            <person name="Tiedje J.M."/>
        </authorList>
    </citation>
    <scope>NUCLEOTIDE SEQUENCE [LARGE SCALE GENOMIC DNA]</scope>
    <source>
        <strain>ATCC BAA-1283 / AT1b</strain>
    </source>
</reference>
<comment type="function">
    <text evidence="1">A translational regulator that binds mRNA to regulate translation initiation and/or mRNA stability. Usually binds in the 5'-UTR at or near the Shine-Dalgarno sequence preventing ribosome-binding, thus repressing translation. Its main target seems to be the major flagellin gene, while its function is anatagonized by FliW.</text>
</comment>
<comment type="subunit">
    <text evidence="1">Homodimer; the beta-strands of each monomer intercalate to form a hydrophobic core, while the alpha-helices form wings that extend away from the core.</text>
</comment>
<comment type="subcellular location">
    <subcellularLocation>
        <location evidence="1">Cytoplasm</location>
    </subcellularLocation>
</comment>
<comment type="similarity">
    <text evidence="1">Belongs to the CsrA/RsmA family.</text>
</comment>
<accession>C4L5P2</accession>
<sequence>MLVLKRKQGEAIHIGDDVTLTVLAIEGDQVKLGIDAPRHIDIHRHEVYIQMQEENESARNSANLMKQMIQKQSEA</sequence>
<keyword id="KW-1005">Bacterial flagellum biogenesis</keyword>
<keyword id="KW-0963">Cytoplasm</keyword>
<keyword id="KW-0678">Repressor</keyword>
<keyword id="KW-0694">RNA-binding</keyword>
<keyword id="KW-0810">Translation regulation</keyword>
<proteinExistence type="inferred from homology"/>
<gene>
    <name evidence="1" type="primary">csrA</name>
    <name type="ordered locus">EAT1b_0928</name>
</gene>
<feature type="chain" id="PRO_1000203643" description="Translational regulator CsrA">
    <location>
        <begin position="1"/>
        <end position="75"/>
    </location>
</feature>
<evidence type="ECO:0000255" key="1">
    <source>
        <dbReference type="HAMAP-Rule" id="MF_00167"/>
    </source>
</evidence>
<name>CSRA_EXISA</name>